<gene>
    <name evidence="1" type="primary">rpsO</name>
    <name type="ordered locus">Sbal195_3414</name>
</gene>
<accession>A9KZW8</accession>
<dbReference type="EMBL" id="CP000891">
    <property type="protein sequence ID" value="ABX50576.1"/>
    <property type="molecule type" value="Genomic_DNA"/>
</dbReference>
<dbReference type="RefSeq" id="WP_006082713.1">
    <property type="nucleotide sequence ID" value="NC_009997.1"/>
</dbReference>
<dbReference type="SMR" id="A9KZW8"/>
<dbReference type="GeneID" id="11773456"/>
<dbReference type="KEGG" id="sbn:Sbal195_3414"/>
<dbReference type="HOGENOM" id="CLU_148518_0_0_6"/>
<dbReference type="Proteomes" id="UP000000770">
    <property type="component" value="Chromosome"/>
</dbReference>
<dbReference type="GO" id="GO:0022627">
    <property type="term" value="C:cytosolic small ribosomal subunit"/>
    <property type="evidence" value="ECO:0007669"/>
    <property type="project" value="TreeGrafter"/>
</dbReference>
<dbReference type="GO" id="GO:0019843">
    <property type="term" value="F:rRNA binding"/>
    <property type="evidence" value="ECO:0007669"/>
    <property type="project" value="UniProtKB-UniRule"/>
</dbReference>
<dbReference type="GO" id="GO:0003735">
    <property type="term" value="F:structural constituent of ribosome"/>
    <property type="evidence" value="ECO:0007669"/>
    <property type="project" value="InterPro"/>
</dbReference>
<dbReference type="GO" id="GO:0006412">
    <property type="term" value="P:translation"/>
    <property type="evidence" value="ECO:0007669"/>
    <property type="project" value="UniProtKB-UniRule"/>
</dbReference>
<dbReference type="CDD" id="cd00353">
    <property type="entry name" value="Ribosomal_S15p_S13e"/>
    <property type="match status" value="1"/>
</dbReference>
<dbReference type="FunFam" id="1.10.287.10:FF:000002">
    <property type="entry name" value="30S ribosomal protein S15"/>
    <property type="match status" value="1"/>
</dbReference>
<dbReference type="Gene3D" id="6.10.250.3130">
    <property type="match status" value="1"/>
</dbReference>
<dbReference type="Gene3D" id="1.10.287.10">
    <property type="entry name" value="S15/NS1, RNA-binding"/>
    <property type="match status" value="1"/>
</dbReference>
<dbReference type="HAMAP" id="MF_01343_B">
    <property type="entry name" value="Ribosomal_uS15_B"/>
    <property type="match status" value="1"/>
</dbReference>
<dbReference type="InterPro" id="IPR000589">
    <property type="entry name" value="Ribosomal_uS15"/>
</dbReference>
<dbReference type="InterPro" id="IPR005290">
    <property type="entry name" value="Ribosomal_uS15_bac-type"/>
</dbReference>
<dbReference type="InterPro" id="IPR009068">
    <property type="entry name" value="uS15_NS1_RNA-bd_sf"/>
</dbReference>
<dbReference type="NCBIfam" id="TIGR00952">
    <property type="entry name" value="S15_bact"/>
    <property type="match status" value="1"/>
</dbReference>
<dbReference type="PANTHER" id="PTHR23321">
    <property type="entry name" value="RIBOSOMAL PROTEIN S15, BACTERIAL AND ORGANELLAR"/>
    <property type="match status" value="1"/>
</dbReference>
<dbReference type="PANTHER" id="PTHR23321:SF26">
    <property type="entry name" value="SMALL RIBOSOMAL SUBUNIT PROTEIN US15M"/>
    <property type="match status" value="1"/>
</dbReference>
<dbReference type="Pfam" id="PF00312">
    <property type="entry name" value="Ribosomal_S15"/>
    <property type="match status" value="1"/>
</dbReference>
<dbReference type="SMART" id="SM01387">
    <property type="entry name" value="Ribosomal_S15"/>
    <property type="match status" value="1"/>
</dbReference>
<dbReference type="SUPFAM" id="SSF47060">
    <property type="entry name" value="S15/NS1 RNA-binding domain"/>
    <property type="match status" value="1"/>
</dbReference>
<dbReference type="PROSITE" id="PS00362">
    <property type="entry name" value="RIBOSOMAL_S15"/>
    <property type="match status" value="1"/>
</dbReference>
<comment type="function">
    <text evidence="1">One of the primary rRNA binding proteins, it binds directly to 16S rRNA where it helps nucleate assembly of the platform of the 30S subunit by binding and bridging several RNA helices of the 16S rRNA.</text>
</comment>
<comment type="function">
    <text evidence="1">Forms an intersubunit bridge (bridge B4) with the 23S rRNA of the 50S subunit in the ribosome.</text>
</comment>
<comment type="subunit">
    <text evidence="1">Part of the 30S ribosomal subunit. Forms a bridge to the 50S subunit in the 70S ribosome, contacting the 23S rRNA.</text>
</comment>
<comment type="similarity">
    <text evidence="1">Belongs to the universal ribosomal protein uS15 family.</text>
</comment>
<protein>
    <recommendedName>
        <fullName evidence="1">Small ribosomal subunit protein uS15</fullName>
    </recommendedName>
    <alternativeName>
        <fullName evidence="2">30S ribosomal protein S15</fullName>
    </alternativeName>
</protein>
<keyword id="KW-0687">Ribonucleoprotein</keyword>
<keyword id="KW-0689">Ribosomal protein</keyword>
<keyword id="KW-0694">RNA-binding</keyword>
<keyword id="KW-0699">rRNA-binding</keyword>
<reference key="1">
    <citation type="submission" date="2007-11" db="EMBL/GenBank/DDBJ databases">
        <title>Complete sequence of chromosome of Shewanella baltica OS195.</title>
        <authorList>
            <consortium name="US DOE Joint Genome Institute"/>
            <person name="Copeland A."/>
            <person name="Lucas S."/>
            <person name="Lapidus A."/>
            <person name="Barry K."/>
            <person name="Glavina del Rio T."/>
            <person name="Dalin E."/>
            <person name="Tice H."/>
            <person name="Pitluck S."/>
            <person name="Chain P."/>
            <person name="Malfatti S."/>
            <person name="Shin M."/>
            <person name="Vergez L."/>
            <person name="Schmutz J."/>
            <person name="Larimer F."/>
            <person name="Land M."/>
            <person name="Hauser L."/>
            <person name="Kyrpides N."/>
            <person name="Kim E."/>
            <person name="Brettar I."/>
            <person name="Rodrigues J."/>
            <person name="Konstantinidis K."/>
            <person name="Klappenbach J."/>
            <person name="Hofle M."/>
            <person name="Tiedje J."/>
            <person name="Richardson P."/>
        </authorList>
    </citation>
    <scope>NUCLEOTIDE SEQUENCE [LARGE SCALE GENOMIC DNA]</scope>
    <source>
        <strain>OS195</strain>
    </source>
</reference>
<evidence type="ECO:0000255" key="1">
    <source>
        <dbReference type="HAMAP-Rule" id="MF_01343"/>
    </source>
</evidence>
<evidence type="ECO:0000305" key="2"/>
<feature type="chain" id="PRO_1000086818" description="Small ribosomal subunit protein uS15">
    <location>
        <begin position="1"/>
        <end position="89"/>
    </location>
</feature>
<sequence length="89" mass="10209">MSLSTEVKAKILADFGRCENDTGSTEVQVALLTAQINHLQAHFKEHIHDHHSRRGLLRMVSSRRKLTAYLKRTDVARYTALIQKLGLRR</sequence>
<organism>
    <name type="scientific">Shewanella baltica (strain OS195)</name>
    <dbReference type="NCBI Taxonomy" id="399599"/>
    <lineage>
        <taxon>Bacteria</taxon>
        <taxon>Pseudomonadati</taxon>
        <taxon>Pseudomonadota</taxon>
        <taxon>Gammaproteobacteria</taxon>
        <taxon>Alteromonadales</taxon>
        <taxon>Shewanellaceae</taxon>
        <taxon>Shewanella</taxon>
    </lineage>
</organism>
<name>RS15_SHEB9</name>
<proteinExistence type="inferred from homology"/>